<organism>
    <name type="scientific">Rickettsia akari (strain Hartford)</name>
    <dbReference type="NCBI Taxonomy" id="293614"/>
    <lineage>
        <taxon>Bacteria</taxon>
        <taxon>Pseudomonadati</taxon>
        <taxon>Pseudomonadota</taxon>
        <taxon>Alphaproteobacteria</taxon>
        <taxon>Rickettsiales</taxon>
        <taxon>Rickettsiaceae</taxon>
        <taxon>Rickettsieae</taxon>
        <taxon>Rickettsia</taxon>
        <taxon>spotted fever group</taxon>
    </lineage>
</organism>
<evidence type="ECO:0000255" key="1">
    <source>
        <dbReference type="HAMAP-Rule" id="MF_01201"/>
    </source>
</evidence>
<sequence length="355" mass="39491">MSLCTLEINISAIKNNYLLLQGICKTSLVGAAVKANGYGLGAVQISKALIKENCRYFFVATSEEGVNLRKALGLDVDILVLNGVFEHDALELIEYNLTPVLNNLKQIEIWQKFSNLKHRLLPCYLHFNTGINRLGLSSDEIEQLINDRDLLKGLDLQYIISHLAISEEIDNPYNLEQLNIFKAYLQYFPNVKASLANSGGIFLGQDYHFDLARPGAALYGLNPVMKNPVTLKAPIIHLQNLTLDSHIGYNMTFTTKRDSVIATLPLGYADGFSRNFSNQGEVFINGRSVPIVGRISMDLINIDVTDLPPLDIFLGQEAEIIGNYCTPDKIASIIGTIGYEVLTSLGSRYKRIYIE</sequence>
<name>ALR_RICAH</name>
<dbReference type="EC" id="5.1.1.1" evidence="1"/>
<dbReference type="EMBL" id="CP000847">
    <property type="protein sequence ID" value="ABV74479.1"/>
    <property type="molecule type" value="Genomic_DNA"/>
</dbReference>
<dbReference type="RefSeq" id="WP_012013349.1">
    <property type="nucleotide sequence ID" value="NC_009881.1"/>
</dbReference>
<dbReference type="SMR" id="A8GM54"/>
<dbReference type="STRING" id="293614.A1C_00730"/>
<dbReference type="KEGG" id="rak:A1C_00730"/>
<dbReference type="eggNOG" id="COG0787">
    <property type="taxonomic scope" value="Bacteria"/>
</dbReference>
<dbReference type="HOGENOM" id="CLU_028393_1_1_5"/>
<dbReference type="UniPathway" id="UPA00042">
    <property type="reaction ID" value="UER00497"/>
</dbReference>
<dbReference type="Proteomes" id="UP000006830">
    <property type="component" value="Chromosome"/>
</dbReference>
<dbReference type="GO" id="GO:0005829">
    <property type="term" value="C:cytosol"/>
    <property type="evidence" value="ECO:0007669"/>
    <property type="project" value="TreeGrafter"/>
</dbReference>
<dbReference type="GO" id="GO:0008784">
    <property type="term" value="F:alanine racemase activity"/>
    <property type="evidence" value="ECO:0007669"/>
    <property type="project" value="UniProtKB-UniRule"/>
</dbReference>
<dbReference type="GO" id="GO:0030170">
    <property type="term" value="F:pyridoxal phosphate binding"/>
    <property type="evidence" value="ECO:0007669"/>
    <property type="project" value="UniProtKB-UniRule"/>
</dbReference>
<dbReference type="GO" id="GO:0030632">
    <property type="term" value="P:D-alanine biosynthetic process"/>
    <property type="evidence" value="ECO:0007669"/>
    <property type="project" value="UniProtKB-UniRule"/>
</dbReference>
<dbReference type="CDD" id="cd00430">
    <property type="entry name" value="PLPDE_III_AR"/>
    <property type="match status" value="1"/>
</dbReference>
<dbReference type="Gene3D" id="3.20.20.10">
    <property type="entry name" value="Alanine racemase"/>
    <property type="match status" value="1"/>
</dbReference>
<dbReference type="Gene3D" id="2.40.37.10">
    <property type="entry name" value="Lyase, Ornithine Decarboxylase, Chain A, domain 1"/>
    <property type="match status" value="1"/>
</dbReference>
<dbReference type="HAMAP" id="MF_01201">
    <property type="entry name" value="Ala_racemase"/>
    <property type="match status" value="1"/>
</dbReference>
<dbReference type="InterPro" id="IPR000821">
    <property type="entry name" value="Ala_racemase"/>
</dbReference>
<dbReference type="InterPro" id="IPR009006">
    <property type="entry name" value="Ala_racemase/Decarboxylase_C"/>
</dbReference>
<dbReference type="InterPro" id="IPR011079">
    <property type="entry name" value="Ala_racemase_C"/>
</dbReference>
<dbReference type="InterPro" id="IPR001608">
    <property type="entry name" value="Ala_racemase_N"/>
</dbReference>
<dbReference type="InterPro" id="IPR020622">
    <property type="entry name" value="Ala_racemase_pyridoxalP-BS"/>
</dbReference>
<dbReference type="InterPro" id="IPR029066">
    <property type="entry name" value="PLP-binding_barrel"/>
</dbReference>
<dbReference type="NCBIfam" id="TIGR00492">
    <property type="entry name" value="alr"/>
    <property type="match status" value="1"/>
</dbReference>
<dbReference type="NCBIfam" id="NF000792">
    <property type="entry name" value="PRK00053.2-3"/>
    <property type="match status" value="1"/>
</dbReference>
<dbReference type="PANTHER" id="PTHR30511">
    <property type="entry name" value="ALANINE RACEMASE"/>
    <property type="match status" value="1"/>
</dbReference>
<dbReference type="PANTHER" id="PTHR30511:SF0">
    <property type="entry name" value="ALANINE RACEMASE, CATABOLIC-RELATED"/>
    <property type="match status" value="1"/>
</dbReference>
<dbReference type="Pfam" id="PF00842">
    <property type="entry name" value="Ala_racemase_C"/>
    <property type="match status" value="1"/>
</dbReference>
<dbReference type="Pfam" id="PF01168">
    <property type="entry name" value="Ala_racemase_N"/>
    <property type="match status" value="1"/>
</dbReference>
<dbReference type="PRINTS" id="PR00992">
    <property type="entry name" value="ALARACEMASE"/>
</dbReference>
<dbReference type="SMART" id="SM01005">
    <property type="entry name" value="Ala_racemase_C"/>
    <property type="match status" value="1"/>
</dbReference>
<dbReference type="SUPFAM" id="SSF50621">
    <property type="entry name" value="Alanine racemase C-terminal domain-like"/>
    <property type="match status" value="1"/>
</dbReference>
<dbReference type="SUPFAM" id="SSF51419">
    <property type="entry name" value="PLP-binding barrel"/>
    <property type="match status" value="1"/>
</dbReference>
<dbReference type="PROSITE" id="PS00395">
    <property type="entry name" value="ALANINE_RACEMASE"/>
    <property type="match status" value="1"/>
</dbReference>
<keyword id="KW-0413">Isomerase</keyword>
<keyword id="KW-0663">Pyridoxal phosphate</keyword>
<protein>
    <recommendedName>
        <fullName evidence="1">Alanine racemase</fullName>
        <ecNumber evidence="1">5.1.1.1</ecNumber>
    </recommendedName>
</protein>
<gene>
    <name type="primary">alr</name>
    <name type="ordered locus">A1C_00730</name>
</gene>
<reference key="1">
    <citation type="submission" date="2007-09" db="EMBL/GenBank/DDBJ databases">
        <title>Complete genome sequence of Rickettsia akari.</title>
        <authorList>
            <person name="Madan A."/>
            <person name="Fahey J."/>
            <person name="Helton E."/>
            <person name="Ketteman M."/>
            <person name="Madan A."/>
            <person name="Rodrigues S."/>
            <person name="Sanchez A."/>
            <person name="Whiting M."/>
            <person name="Dasch G."/>
            <person name="Eremeeva M."/>
        </authorList>
    </citation>
    <scope>NUCLEOTIDE SEQUENCE [LARGE SCALE GENOMIC DNA]</scope>
    <source>
        <strain>Hartford</strain>
    </source>
</reference>
<proteinExistence type="inferred from homology"/>
<accession>A8GM54</accession>
<feature type="chain" id="PRO_1000066034" description="Alanine racemase">
    <location>
        <begin position="1"/>
        <end position="355"/>
    </location>
</feature>
<feature type="active site" description="Proton acceptor; specific for D-alanine" evidence="1">
    <location>
        <position position="34"/>
    </location>
</feature>
<feature type="active site" description="Proton acceptor; specific for L-alanine" evidence="1">
    <location>
        <position position="249"/>
    </location>
</feature>
<feature type="binding site" evidence="1">
    <location>
        <position position="133"/>
    </location>
    <ligand>
        <name>substrate</name>
    </ligand>
</feature>
<feature type="binding site" evidence="1">
    <location>
        <position position="297"/>
    </location>
    <ligand>
        <name>substrate</name>
    </ligand>
</feature>
<feature type="modified residue" description="N6-(pyridoxal phosphate)lysine" evidence="1">
    <location>
        <position position="34"/>
    </location>
</feature>
<comment type="function">
    <text evidence="1">Catalyzes the interconversion of L-alanine and D-alanine. May also act on other amino acids.</text>
</comment>
<comment type="catalytic activity">
    <reaction evidence="1">
        <text>L-alanine = D-alanine</text>
        <dbReference type="Rhea" id="RHEA:20249"/>
        <dbReference type="ChEBI" id="CHEBI:57416"/>
        <dbReference type="ChEBI" id="CHEBI:57972"/>
        <dbReference type="EC" id="5.1.1.1"/>
    </reaction>
</comment>
<comment type="cofactor">
    <cofactor evidence="1">
        <name>pyridoxal 5'-phosphate</name>
        <dbReference type="ChEBI" id="CHEBI:597326"/>
    </cofactor>
</comment>
<comment type="pathway">
    <text evidence="1">Amino-acid biosynthesis; D-alanine biosynthesis; D-alanine from L-alanine: step 1/1.</text>
</comment>
<comment type="similarity">
    <text evidence="1">Belongs to the alanine racemase family.</text>
</comment>